<proteinExistence type="inferred from homology"/>
<sequence>MAEEFLNTHNASILLSAANKSHYPQDDLPEVALAGRSNVGKSSFINTLLGRKNLARTSSKPGKTQLLNFYNIDDKLRFVDVPGYGYAKVSKTERAKWGKMIEEYLVTRDNLRVVVSLVDFRHDPSADDIQIYEFLKYYEIPVIIVATKADKIPRGKWNKHESSIKKKLNFDKKDHFIVFSSVDRTGLDESWDTILSEL</sequence>
<keyword id="KW-0131">Cell cycle</keyword>
<keyword id="KW-0132">Cell division</keyword>
<keyword id="KW-0342">GTP-binding</keyword>
<keyword id="KW-0460">Magnesium</keyword>
<keyword id="KW-0479">Metal-binding</keyword>
<keyword id="KW-0547">Nucleotide-binding</keyword>
<keyword id="KW-0717">Septation</keyword>
<dbReference type="EMBL" id="AL766850">
    <property type="protein sequence ID" value="CAD47041.1"/>
    <property type="molecule type" value="Genomic_DNA"/>
</dbReference>
<dbReference type="RefSeq" id="WP_000796923.1">
    <property type="nucleotide sequence ID" value="NC_004368.1"/>
</dbReference>
<dbReference type="SMR" id="Q8E4L9"/>
<dbReference type="KEGG" id="san:gbs1382"/>
<dbReference type="eggNOG" id="COG0218">
    <property type="taxonomic scope" value="Bacteria"/>
</dbReference>
<dbReference type="HOGENOM" id="CLU_033732_3_0_9"/>
<dbReference type="Proteomes" id="UP000000823">
    <property type="component" value="Chromosome"/>
</dbReference>
<dbReference type="GO" id="GO:0005829">
    <property type="term" value="C:cytosol"/>
    <property type="evidence" value="ECO:0007669"/>
    <property type="project" value="TreeGrafter"/>
</dbReference>
<dbReference type="GO" id="GO:0005525">
    <property type="term" value="F:GTP binding"/>
    <property type="evidence" value="ECO:0007669"/>
    <property type="project" value="UniProtKB-UniRule"/>
</dbReference>
<dbReference type="GO" id="GO:0046872">
    <property type="term" value="F:metal ion binding"/>
    <property type="evidence" value="ECO:0007669"/>
    <property type="project" value="UniProtKB-KW"/>
</dbReference>
<dbReference type="GO" id="GO:0000917">
    <property type="term" value="P:division septum assembly"/>
    <property type="evidence" value="ECO:0007669"/>
    <property type="project" value="UniProtKB-KW"/>
</dbReference>
<dbReference type="CDD" id="cd01876">
    <property type="entry name" value="YihA_EngB"/>
    <property type="match status" value="1"/>
</dbReference>
<dbReference type="FunFam" id="3.40.50.300:FF:000098">
    <property type="entry name" value="Probable GTP-binding protein EngB"/>
    <property type="match status" value="1"/>
</dbReference>
<dbReference type="Gene3D" id="3.40.50.300">
    <property type="entry name" value="P-loop containing nucleotide triphosphate hydrolases"/>
    <property type="match status" value="1"/>
</dbReference>
<dbReference type="HAMAP" id="MF_00321">
    <property type="entry name" value="GTPase_EngB"/>
    <property type="match status" value="1"/>
</dbReference>
<dbReference type="InterPro" id="IPR030393">
    <property type="entry name" value="G_ENGB_dom"/>
</dbReference>
<dbReference type="InterPro" id="IPR006073">
    <property type="entry name" value="GTP-bd"/>
</dbReference>
<dbReference type="InterPro" id="IPR019987">
    <property type="entry name" value="GTP-bd_ribosome_bio_YsxC"/>
</dbReference>
<dbReference type="InterPro" id="IPR027417">
    <property type="entry name" value="P-loop_NTPase"/>
</dbReference>
<dbReference type="InterPro" id="IPR005225">
    <property type="entry name" value="Small_GTP-bd"/>
</dbReference>
<dbReference type="NCBIfam" id="TIGR03598">
    <property type="entry name" value="GTPase_YsxC"/>
    <property type="match status" value="1"/>
</dbReference>
<dbReference type="NCBIfam" id="TIGR00231">
    <property type="entry name" value="small_GTP"/>
    <property type="match status" value="1"/>
</dbReference>
<dbReference type="PANTHER" id="PTHR11649:SF13">
    <property type="entry name" value="ENGB-TYPE G DOMAIN-CONTAINING PROTEIN"/>
    <property type="match status" value="1"/>
</dbReference>
<dbReference type="PANTHER" id="PTHR11649">
    <property type="entry name" value="MSS1/TRME-RELATED GTP-BINDING PROTEIN"/>
    <property type="match status" value="1"/>
</dbReference>
<dbReference type="Pfam" id="PF01926">
    <property type="entry name" value="MMR_HSR1"/>
    <property type="match status" value="1"/>
</dbReference>
<dbReference type="SUPFAM" id="SSF52540">
    <property type="entry name" value="P-loop containing nucleoside triphosphate hydrolases"/>
    <property type="match status" value="1"/>
</dbReference>
<dbReference type="PROSITE" id="PS51706">
    <property type="entry name" value="G_ENGB"/>
    <property type="match status" value="1"/>
</dbReference>
<evidence type="ECO:0000255" key="1">
    <source>
        <dbReference type="HAMAP-Rule" id="MF_00321"/>
    </source>
</evidence>
<organism>
    <name type="scientific">Streptococcus agalactiae serotype III (strain NEM316)</name>
    <dbReference type="NCBI Taxonomy" id="211110"/>
    <lineage>
        <taxon>Bacteria</taxon>
        <taxon>Bacillati</taxon>
        <taxon>Bacillota</taxon>
        <taxon>Bacilli</taxon>
        <taxon>Lactobacillales</taxon>
        <taxon>Streptococcaceae</taxon>
        <taxon>Streptococcus</taxon>
    </lineage>
</organism>
<accession>Q8E4L9</accession>
<comment type="function">
    <text evidence="1">Necessary for normal cell division and for the maintenance of normal septation.</text>
</comment>
<comment type="cofactor">
    <cofactor evidence="1">
        <name>Mg(2+)</name>
        <dbReference type="ChEBI" id="CHEBI:18420"/>
    </cofactor>
</comment>
<comment type="similarity">
    <text evidence="1">Belongs to the TRAFAC class TrmE-Era-EngA-EngB-Septin-like GTPase superfamily. EngB GTPase family.</text>
</comment>
<gene>
    <name evidence="1" type="primary">engB</name>
    <name type="ordered locus">gbs1382</name>
</gene>
<feature type="chain" id="PRO_0000266961" description="Probable GTP-binding protein EngB">
    <location>
        <begin position="1"/>
        <end position="198"/>
    </location>
</feature>
<feature type="domain" description="EngB-type G" evidence="1">
    <location>
        <begin position="27"/>
        <end position="198"/>
    </location>
</feature>
<feature type="binding site" evidence="1">
    <location>
        <begin position="35"/>
        <end position="42"/>
    </location>
    <ligand>
        <name>GTP</name>
        <dbReference type="ChEBI" id="CHEBI:37565"/>
    </ligand>
</feature>
<feature type="binding site" evidence="1">
    <location>
        <position position="42"/>
    </location>
    <ligand>
        <name>Mg(2+)</name>
        <dbReference type="ChEBI" id="CHEBI:18420"/>
    </ligand>
</feature>
<feature type="binding site" evidence="1">
    <location>
        <begin position="62"/>
        <end position="66"/>
    </location>
    <ligand>
        <name>GTP</name>
        <dbReference type="ChEBI" id="CHEBI:37565"/>
    </ligand>
</feature>
<feature type="binding site" evidence="1">
    <location>
        <position position="64"/>
    </location>
    <ligand>
        <name>Mg(2+)</name>
        <dbReference type="ChEBI" id="CHEBI:18420"/>
    </ligand>
</feature>
<feature type="binding site" evidence="1">
    <location>
        <begin position="80"/>
        <end position="83"/>
    </location>
    <ligand>
        <name>GTP</name>
        <dbReference type="ChEBI" id="CHEBI:37565"/>
    </ligand>
</feature>
<feature type="binding site" evidence="1">
    <location>
        <begin position="147"/>
        <end position="150"/>
    </location>
    <ligand>
        <name>GTP</name>
        <dbReference type="ChEBI" id="CHEBI:37565"/>
    </ligand>
</feature>
<feature type="binding site" evidence="1">
    <location>
        <begin position="179"/>
        <end position="181"/>
    </location>
    <ligand>
        <name>GTP</name>
        <dbReference type="ChEBI" id="CHEBI:37565"/>
    </ligand>
</feature>
<protein>
    <recommendedName>
        <fullName evidence="1">Probable GTP-binding protein EngB</fullName>
    </recommendedName>
</protein>
<name>ENGB_STRA3</name>
<reference key="1">
    <citation type="journal article" date="2002" name="Mol. Microbiol.">
        <title>Genome sequence of Streptococcus agalactiae, a pathogen causing invasive neonatal disease.</title>
        <authorList>
            <person name="Glaser P."/>
            <person name="Rusniok C."/>
            <person name="Buchrieser C."/>
            <person name="Chevalier F."/>
            <person name="Frangeul L."/>
            <person name="Msadek T."/>
            <person name="Zouine M."/>
            <person name="Couve E."/>
            <person name="Lalioui L."/>
            <person name="Poyart C."/>
            <person name="Trieu-Cuot P."/>
            <person name="Kunst F."/>
        </authorList>
    </citation>
    <scope>NUCLEOTIDE SEQUENCE [LARGE SCALE GENOMIC DNA]</scope>
    <source>
        <strain>NEM316</strain>
    </source>
</reference>